<sequence>MNSPQNVSTKKVTVTGAAGQISYSLLWRIANGEVFGTDTPVELKLLEIPQALGGAEGVAMELLDSAFPLLRNITITADANEAFDGANAAFLVGAKPRGKGEERADLLANNGKIFGPQGKAINDNAADDIRVLVVGNPANTNALIASAAAPDVPASRFNAMMRLDHNRAISQLATKLGRGSAEFNNIVVWGNHSATQFPDITYATVGGEKVTDLVDHDWYVEEFIPRVANRGAEIIEVRGKSSAASAASSAIDHMRDWVQGTEAWSSAAIPSTGAYGIPEGIFVGLPTVSRNGEWEIVEGLEISDFQRARIDANAQELQAEREAVRDLL</sequence>
<gene>
    <name evidence="1" type="primary">mdh</name>
    <name type="ordered locus">Cgl2380</name>
    <name type="ordered locus">cg2613</name>
</gene>
<reference key="1">
    <citation type="submission" date="2000-12" db="EMBL/GenBank/DDBJ databases">
        <title>Cloning, sequencing and expression of the gene encoding malate dehydrogenase in the amino-acid producer Corynebacterium glutamicum.</title>
        <authorList>
            <person name="Kos P.B."/>
            <person name="Puskas L.G."/>
            <person name="Hackler L."/>
            <person name="Yukawa H."/>
        </authorList>
    </citation>
    <scope>NUCLEOTIDE SEQUENCE [GENOMIC DNA]</scope>
    <source>
        <strain>ATCC 13869 / DSMZ 1412 / NCIMB 9567</strain>
    </source>
</reference>
<reference key="2">
    <citation type="journal article" date="2003" name="Appl. Microbiol. Biotechnol.">
        <title>The Corynebacterium glutamicum genome: features and impacts on biotechnological processes.</title>
        <authorList>
            <person name="Ikeda M."/>
            <person name="Nakagawa S."/>
        </authorList>
    </citation>
    <scope>NUCLEOTIDE SEQUENCE [LARGE SCALE GENOMIC DNA]</scope>
    <source>
        <strain>ATCC 13032 / DSM 20300 / JCM 1318 / BCRC 11384 / CCUG 27702 / LMG 3730 / NBRC 12168 / NCIMB 10025 / NRRL B-2784 / 534</strain>
    </source>
</reference>
<reference key="3">
    <citation type="journal article" date="2003" name="J. Biotechnol.">
        <title>The complete Corynebacterium glutamicum ATCC 13032 genome sequence and its impact on the production of L-aspartate-derived amino acids and vitamins.</title>
        <authorList>
            <person name="Kalinowski J."/>
            <person name="Bathe B."/>
            <person name="Bartels D."/>
            <person name="Bischoff N."/>
            <person name="Bott M."/>
            <person name="Burkovski A."/>
            <person name="Dusch N."/>
            <person name="Eggeling L."/>
            <person name="Eikmanns B.J."/>
            <person name="Gaigalat L."/>
            <person name="Goesmann A."/>
            <person name="Hartmann M."/>
            <person name="Huthmacher K."/>
            <person name="Kraemer R."/>
            <person name="Linke B."/>
            <person name="McHardy A.C."/>
            <person name="Meyer F."/>
            <person name="Moeckel B."/>
            <person name="Pfefferle W."/>
            <person name="Puehler A."/>
            <person name="Rey D.A."/>
            <person name="Rueckert C."/>
            <person name="Rupp O."/>
            <person name="Sahm H."/>
            <person name="Wendisch V.F."/>
            <person name="Wiegraebe I."/>
            <person name="Tauch A."/>
        </authorList>
    </citation>
    <scope>NUCLEOTIDE SEQUENCE [LARGE SCALE GENOMIC DNA]</scope>
    <source>
        <strain>ATCC 13032 / DSM 20300 / JCM 1318 / BCRC 11384 / CCUG 27702 / LMG 3730 / NBRC 12168 / NCIMB 10025 / NRRL B-2784 / 534</strain>
    </source>
</reference>
<reference key="4">
    <citation type="journal article" date="2003" name="J. Biosci. Bioeng.">
        <title>Purification and characterization of malate dehydrogenase from Corynebacterium glutamicum.</title>
        <authorList>
            <person name="Genda T."/>
            <person name="Nakamatsu T."/>
            <person name="Ozak H."/>
        </authorList>
    </citation>
    <scope>PROTEIN SEQUENCE OF 2-9</scope>
    <scope>FUNCTION</scope>
    <scope>CATALYTIC ACTIVITY</scope>
    <scope>ACTIVITY REGULATION</scope>
    <scope>BIOPHYSICOCHEMICAL PROPERTIES</scope>
    <scope>SUBUNIT</scope>
    <source>
        <strain>ATCC 14067 / DSM 20411 / NCIB 9565 / 2247</strain>
    </source>
</reference>
<comment type="function">
    <text evidence="2">Catalyzes the reversible oxidation of malate to oxaloacetate. Exhibits higher catalytic efficiency for oxaloacetate reduction than for malate oxidation in vitro. Almost equally active both for NADH and NADPH on the bases of the kcat values at pH 6.5, but catalytic efficiency for oxaloacetate reduction is 50-fold higher with NADH.</text>
</comment>
<comment type="catalytic activity">
    <reaction evidence="1 2">
        <text>(S)-malate + NAD(+) = oxaloacetate + NADH + H(+)</text>
        <dbReference type="Rhea" id="RHEA:21432"/>
        <dbReference type="ChEBI" id="CHEBI:15378"/>
        <dbReference type="ChEBI" id="CHEBI:15589"/>
        <dbReference type="ChEBI" id="CHEBI:16452"/>
        <dbReference type="ChEBI" id="CHEBI:57540"/>
        <dbReference type="ChEBI" id="CHEBI:57945"/>
        <dbReference type="EC" id="1.1.1.37"/>
    </reaction>
</comment>
<comment type="activity regulation">
    <text evidence="2">Citrate activates the enzyme in the oxidation of malate to oxaloacetate and inhibits it in the reverse reaction.</text>
</comment>
<comment type="biophysicochemical properties">
    <kinetics>
        <KM evidence="2">0.025 mM for oxaloacetate (at pH 6.5 in the presence of NADH)</KM>
        <KM evidence="2">0.55 mM for oxaloacetate (at pH 6.5 in the presence of NADPH)</KM>
        <KM evidence="2">0.07 mM for NADH (at pH 6.5)</KM>
        <KM evidence="2">0.25 mM for NADPH (at pH 6.5)</KM>
        <KM evidence="2">0.8 mM for malate (at pH 10.5 in the presence of NAD)</KM>
        <KM evidence="2">0.4 mM for NAD (at pH 10.5)</KM>
        <text evidence="2">kcat is 360 sec(-1) for NADH-dependent reduction of oxaloacetate. kcat is 150 sec(-1) for NADPH-dependent reduction of oxaloacetate. kcat is 140 sec(-1) for NAD(+)-dependent oxidation of malate.</text>
    </kinetics>
</comment>
<comment type="subunit">
    <text evidence="2">Homotetramer.</text>
</comment>
<comment type="similarity">
    <text evidence="1">Belongs to the LDH/MDH superfamily. MDH type 2 family.</text>
</comment>
<protein>
    <recommendedName>
        <fullName evidence="1">Malate dehydrogenase</fullName>
        <ecNumber evidence="1 2">1.1.1.37</ecNumber>
    </recommendedName>
</protein>
<organism>
    <name type="scientific">Corynebacterium glutamicum (strain ATCC 13032 / DSM 20300 / JCM 1318 / BCRC 11384 / CCUG 27702 / LMG 3730 / NBRC 12168 / NCIMB 10025 / NRRL B-2784 / 534)</name>
    <dbReference type="NCBI Taxonomy" id="196627"/>
    <lineage>
        <taxon>Bacteria</taxon>
        <taxon>Bacillati</taxon>
        <taxon>Actinomycetota</taxon>
        <taxon>Actinomycetes</taxon>
        <taxon>Mycobacteriales</taxon>
        <taxon>Corynebacteriaceae</taxon>
        <taxon>Corynebacterium</taxon>
    </lineage>
</organism>
<dbReference type="EC" id="1.1.1.37" evidence="1 2"/>
<dbReference type="EMBL" id="AJ303072">
    <property type="protein sequence ID" value="CAC83073.1"/>
    <property type="molecule type" value="Genomic_DNA"/>
</dbReference>
<dbReference type="EMBL" id="BA000036">
    <property type="protein sequence ID" value="BAB99773.1"/>
    <property type="molecule type" value="Genomic_DNA"/>
</dbReference>
<dbReference type="EMBL" id="BX927155">
    <property type="protein sequence ID" value="CAF21045.1"/>
    <property type="molecule type" value="Genomic_DNA"/>
</dbReference>
<dbReference type="RefSeq" id="NP_601581.1">
    <property type="nucleotide sequence ID" value="NC_003450.3"/>
</dbReference>
<dbReference type="RefSeq" id="WP_011015079.1">
    <property type="nucleotide sequence ID" value="NC_006958.1"/>
</dbReference>
<dbReference type="PDB" id="6ITK">
    <property type="method" value="X-ray"/>
    <property type="resolution" value="2.00 A"/>
    <property type="chains" value="A/B=1-328"/>
</dbReference>
<dbReference type="PDBsum" id="6ITK"/>
<dbReference type="SMR" id="Q8NN33"/>
<dbReference type="STRING" id="196627.cg2613"/>
<dbReference type="KEGG" id="cgb:cg2613"/>
<dbReference type="KEGG" id="cgl:Cgl2380"/>
<dbReference type="PATRIC" id="fig|196627.13.peg.2315"/>
<dbReference type="eggNOG" id="COG0039">
    <property type="taxonomic scope" value="Bacteria"/>
</dbReference>
<dbReference type="HOGENOM" id="CLU_040727_2_0_11"/>
<dbReference type="OrthoDB" id="9802969at2"/>
<dbReference type="BioCyc" id="CORYNE:G18NG-11977-MONOMER"/>
<dbReference type="BRENDA" id="1.1.1.37">
    <property type="organism ID" value="960"/>
</dbReference>
<dbReference type="SABIO-RK" id="Q8NN33"/>
<dbReference type="Proteomes" id="UP000000582">
    <property type="component" value="Chromosome"/>
</dbReference>
<dbReference type="Proteomes" id="UP000001009">
    <property type="component" value="Chromosome"/>
</dbReference>
<dbReference type="GO" id="GO:0030060">
    <property type="term" value="F:L-malate dehydrogenase (NAD+) activity"/>
    <property type="evidence" value="ECO:0007669"/>
    <property type="project" value="UniProtKB-UniRule"/>
</dbReference>
<dbReference type="GO" id="GO:0006108">
    <property type="term" value="P:malate metabolic process"/>
    <property type="evidence" value="ECO:0007669"/>
    <property type="project" value="InterPro"/>
</dbReference>
<dbReference type="GO" id="GO:0006099">
    <property type="term" value="P:tricarboxylic acid cycle"/>
    <property type="evidence" value="ECO:0007669"/>
    <property type="project" value="UniProtKB-UniRule"/>
</dbReference>
<dbReference type="CDD" id="cd01338">
    <property type="entry name" value="MDH_chloroplast-like"/>
    <property type="match status" value="1"/>
</dbReference>
<dbReference type="FunFam" id="3.40.50.720:FF:000010">
    <property type="entry name" value="Malate dehydrogenase"/>
    <property type="match status" value="1"/>
</dbReference>
<dbReference type="FunFam" id="3.90.110.10:FF:000002">
    <property type="entry name" value="Malate dehydrogenase"/>
    <property type="match status" value="1"/>
</dbReference>
<dbReference type="Gene3D" id="3.90.110.10">
    <property type="entry name" value="Lactate dehydrogenase/glycoside hydrolase, family 4, C-terminal"/>
    <property type="match status" value="1"/>
</dbReference>
<dbReference type="Gene3D" id="3.40.50.720">
    <property type="entry name" value="NAD(P)-binding Rossmann-like Domain"/>
    <property type="match status" value="1"/>
</dbReference>
<dbReference type="HAMAP" id="MF_01517">
    <property type="entry name" value="Malate_dehydrog_2"/>
    <property type="match status" value="1"/>
</dbReference>
<dbReference type="InterPro" id="IPR001557">
    <property type="entry name" value="L-lactate/malate_DH"/>
</dbReference>
<dbReference type="InterPro" id="IPR022383">
    <property type="entry name" value="Lactate/malate_DH_C"/>
</dbReference>
<dbReference type="InterPro" id="IPR001236">
    <property type="entry name" value="Lactate/malate_DH_N"/>
</dbReference>
<dbReference type="InterPro" id="IPR015955">
    <property type="entry name" value="Lactate_DH/Glyco_Ohase_4_C"/>
</dbReference>
<dbReference type="InterPro" id="IPR010945">
    <property type="entry name" value="Malate_DH_type2"/>
</dbReference>
<dbReference type="InterPro" id="IPR036291">
    <property type="entry name" value="NAD(P)-bd_dom_sf"/>
</dbReference>
<dbReference type="NCBIfam" id="TIGR01759">
    <property type="entry name" value="MalateDH-SF1"/>
    <property type="match status" value="1"/>
</dbReference>
<dbReference type="NCBIfam" id="NF003916">
    <property type="entry name" value="PRK05442.1"/>
    <property type="match status" value="1"/>
</dbReference>
<dbReference type="PANTHER" id="PTHR23382">
    <property type="entry name" value="MALATE DEHYDROGENASE"/>
    <property type="match status" value="1"/>
</dbReference>
<dbReference type="Pfam" id="PF02866">
    <property type="entry name" value="Ldh_1_C"/>
    <property type="match status" value="1"/>
</dbReference>
<dbReference type="Pfam" id="PF00056">
    <property type="entry name" value="Ldh_1_N"/>
    <property type="match status" value="1"/>
</dbReference>
<dbReference type="PIRSF" id="PIRSF000102">
    <property type="entry name" value="Lac_mal_DH"/>
    <property type="match status" value="1"/>
</dbReference>
<dbReference type="SUPFAM" id="SSF56327">
    <property type="entry name" value="LDH C-terminal domain-like"/>
    <property type="match status" value="1"/>
</dbReference>
<dbReference type="SUPFAM" id="SSF51735">
    <property type="entry name" value="NAD(P)-binding Rossmann-fold domains"/>
    <property type="match status" value="1"/>
</dbReference>
<proteinExistence type="evidence at protein level"/>
<accession>Q8NN33</accession>
<accession>Q8VNW2</accession>
<name>MDH_CORGL</name>
<keyword id="KW-0002">3D-structure</keyword>
<keyword id="KW-0903">Direct protein sequencing</keyword>
<keyword id="KW-0520">NAD</keyword>
<keyword id="KW-0560">Oxidoreductase</keyword>
<keyword id="KW-1185">Reference proteome</keyword>
<keyword id="KW-0816">Tricarboxylic acid cycle</keyword>
<feature type="initiator methionine" description="Removed" evidence="2">
    <location>
        <position position="1"/>
    </location>
</feature>
<feature type="chain" id="PRO_0000113364" description="Malate dehydrogenase">
    <location>
        <begin position="2"/>
        <end position="328"/>
    </location>
</feature>
<feature type="active site" description="Proton acceptor" evidence="1">
    <location>
        <position position="192"/>
    </location>
</feature>
<feature type="binding site" evidence="1">
    <location>
        <begin position="16"/>
        <end position="22"/>
    </location>
    <ligand>
        <name>NAD(+)</name>
        <dbReference type="ChEBI" id="CHEBI:57540"/>
    </ligand>
</feature>
<feature type="binding site" evidence="1">
    <location>
        <position position="97"/>
    </location>
    <ligand>
        <name>substrate</name>
    </ligand>
</feature>
<feature type="binding site" evidence="1">
    <location>
        <position position="103"/>
    </location>
    <ligand>
        <name>substrate</name>
    </ligand>
</feature>
<feature type="binding site" evidence="1">
    <location>
        <position position="110"/>
    </location>
    <ligand>
        <name>NAD(+)</name>
        <dbReference type="ChEBI" id="CHEBI:57540"/>
    </ligand>
</feature>
<feature type="binding site" evidence="1">
    <location>
        <position position="117"/>
    </location>
    <ligand>
        <name>NAD(+)</name>
        <dbReference type="ChEBI" id="CHEBI:57540"/>
    </ligand>
</feature>
<feature type="binding site" evidence="1">
    <location>
        <begin position="134"/>
        <end position="136"/>
    </location>
    <ligand>
        <name>NAD(+)</name>
        <dbReference type="ChEBI" id="CHEBI:57540"/>
    </ligand>
</feature>
<feature type="binding site" evidence="1">
    <location>
        <position position="136"/>
    </location>
    <ligand>
        <name>substrate</name>
    </ligand>
</feature>
<feature type="binding site" evidence="1">
    <location>
        <position position="167"/>
    </location>
    <ligand>
        <name>substrate</name>
    </ligand>
</feature>
<feature type="sequence conflict" description="In Ref. 1; CAC83073." evidence="3" ref="1">
    <original>A</original>
    <variation>G</variation>
    <location>
        <position position="274"/>
    </location>
</feature>
<feature type="strand" evidence="4">
    <location>
        <begin position="10"/>
        <end position="16"/>
    </location>
</feature>
<feature type="helix" evidence="4">
    <location>
        <begin position="20"/>
        <end position="30"/>
    </location>
</feature>
<feature type="turn" evidence="4">
    <location>
        <begin position="33"/>
        <end position="35"/>
    </location>
</feature>
<feature type="strand" evidence="4">
    <location>
        <begin position="41"/>
        <end position="46"/>
    </location>
</feature>
<feature type="helix" evidence="4">
    <location>
        <begin position="49"/>
        <end position="51"/>
    </location>
</feature>
<feature type="helix" evidence="4">
    <location>
        <begin position="52"/>
        <end position="63"/>
    </location>
</feature>
<feature type="turn" evidence="4">
    <location>
        <begin position="64"/>
        <end position="66"/>
    </location>
</feature>
<feature type="strand" evidence="4">
    <location>
        <begin position="70"/>
        <end position="77"/>
    </location>
</feature>
<feature type="helix" evidence="4">
    <location>
        <begin position="79"/>
        <end position="83"/>
    </location>
</feature>
<feature type="strand" evidence="4">
    <location>
        <begin position="87"/>
        <end position="91"/>
    </location>
</feature>
<feature type="helix" evidence="4">
    <location>
        <begin position="103"/>
        <end position="124"/>
    </location>
</feature>
<feature type="strand" evidence="4">
    <location>
        <begin position="130"/>
        <end position="133"/>
    </location>
</feature>
<feature type="strand" evidence="4">
    <location>
        <begin position="135"/>
        <end position="137"/>
    </location>
</feature>
<feature type="helix" evidence="4">
    <location>
        <begin position="138"/>
        <end position="147"/>
    </location>
</feature>
<feature type="helix" evidence="4">
    <location>
        <begin position="154"/>
        <end position="156"/>
    </location>
</feature>
<feature type="strand" evidence="4">
    <location>
        <begin position="157"/>
        <end position="160"/>
    </location>
</feature>
<feature type="helix" evidence="4">
    <location>
        <begin position="162"/>
        <end position="176"/>
    </location>
</feature>
<feature type="helix" evidence="4">
    <location>
        <begin position="180"/>
        <end position="182"/>
    </location>
</feature>
<feature type="strand" evidence="4">
    <location>
        <begin position="187"/>
        <end position="190"/>
    </location>
</feature>
<feature type="strand" evidence="4">
    <location>
        <begin position="197"/>
        <end position="199"/>
    </location>
</feature>
<feature type="helix" evidence="4">
    <location>
        <begin position="210"/>
        <end position="212"/>
    </location>
</feature>
<feature type="helix" evidence="4">
    <location>
        <begin position="216"/>
        <end position="221"/>
    </location>
</feature>
<feature type="helix" evidence="4">
    <location>
        <begin position="223"/>
        <end position="228"/>
    </location>
</feature>
<feature type="helix" evidence="4">
    <location>
        <begin position="230"/>
        <end position="238"/>
    </location>
</feature>
<feature type="helix" evidence="4">
    <location>
        <begin position="244"/>
        <end position="259"/>
    </location>
</feature>
<feature type="strand" evidence="4">
    <location>
        <begin position="261"/>
        <end position="263"/>
    </location>
</feature>
<feature type="strand" evidence="4">
    <location>
        <begin position="267"/>
        <end position="270"/>
    </location>
</feature>
<feature type="helix" evidence="4">
    <location>
        <begin position="274"/>
        <end position="276"/>
    </location>
</feature>
<feature type="strand" evidence="4">
    <location>
        <begin position="279"/>
        <end position="284"/>
    </location>
</feature>
<feature type="strand" evidence="4">
    <location>
        <begin position="287"/>
        <end position="290"/>
    </location>
</feature>
<feature type="strand" evidence="4">
    <location>
        <begin position="293"/>
        <end position="296"/>
    </location>
</feature>
<feature type="helix" evidence="4">
    <location>
        <begin position="304"/>
        <end position="323"/>
    </location>
</feature>
<feature type="helix" evidence="4">
    <location>
        <begin position="325"/>
        <end position="327"/>
    </location>
</feature>
<evidence type="ECO:0000255" key="1">
    <source>
        <dbReference type="HAMAP-Rule" id="MF_01517"/>
    </source>
</evidence>
<evidence type="ECO:0000269" key="2">
    <source>
    </source>
</evidence>
<evidence type="ECO:0000305" key="3"/>
<evidence type="ECO:0007829" key="4">
    <source>
        <dbReference type="PDB" id="6ITK"/>
    </source>
</evidence>